<reference key="1">
    <citation type="submission" date="2006-12" db="EMBL/GenBank/DDBJ databases">
        <title>Complete sequence of chromosome of Mycobacterium sp. KMS.</title>
        <authorList>
            <consortium name="US DOE Joint Genome Institute"/>
            <person name="Copeland A."/>
            <person name="Lucas S."/>
            <person name="Lapidus A."/>
            <person name="Barry K."/>
            <person name="Detter J.C."/>
            <person name="Glavina del Rio T."/>
            <person name="Hammon N."/>
            <person name="Israni S."/>
            <person name="Dalin E."/>
            <person name="Tice H."/>
            <person name="Pitluck S."/>
            <person name="Kiss H."/>
            <person name="Brettin T."/>
            <person name="Bruce D."/>
            <person name="Han C."/>
            <person name="Tapia R."/>
            <person name="Gilna P."/>
            <person name="Schmutz J."/>
            <person name="Larimer F."/>
            <person name="Land M."/>
            <person name="Hauser L."/>
            <person name="Kyrpides N."/>
            <person name="Mikhailova N."/>
            <person name="Miller C.D."/>
            <person name="Richardson P."/>
        </authorList>
    </citation>
    <scope>NUCLEOTIDE SEQUENCE [LARGE SCALE GENOMIC DNA]</scope>
    <source>
        <strain>KMS</strain>
    </source>
</reference>
<name>TRPD_MYCSK</name>
<keyword id="KW-0028">Amino-acid biosynthesis</keyword>
<keyword id="KW-0057">Aromatic amino acid biosynthesis</keyword>
<keyword id="KW-0328">Glycosyltransferase</keyword>
<keyword id="KW-0460">Magnesium</keyword>
<keyword id="KW-0479">Metal-binding</keyword>
<keyword id="KW-0808">Transferase</keyword>
<keyword id="KW-0822">Tryptophan biosynthesis</keyword>
<organism>
    <name type="scientific">Mycobacterium sp. (strain KMS)</name>
    <dbReference type="NCBI Taxonomy" id="189918"/>
    <lineage>
        <taxon>Bacteria</taxon>
        <taxon>Bacillati</taxon>
        <taxon>Actinomycetota</taxon>
        <taxon>Actinomycetes</taxon>
        <taxon>Mycobacteriales</taxon>
        <taxon>Mycobacteriaceae</taxon>
        <taxon>Mycobacterium</taxon>
    </lineage>
</organism>
<accession>A1UI88</accession>
<dbReference type="EC" id="2.4.2.18" evidence="1"/>
<dbReference type="EMBL" id="CP000518">
    <property type="protein sequence ID" value="ABL92546.1"/>
    <property type="molecule type" value="Genomic_DNA"/>
</dbReference>
<dbReference type="SMR" id="A1UI88"/>
<dbReference type="STRING" id="189918.Mkms_3352"/>
<dbReference type="KEGG" id="mkm:Mkms_3352"/>
<dbReference type="HOGENOM" id="CLU_034315_4_1_11"/>
<dbReference type="UniPathway" id="UPA00035">
    <property type="reaction ID" value="UER00041"/>
</dbReference>
<dbReference type="GO" id="GO:0005829">
    <property type="term" value="C:cytosol"/>
    <property type="evidence" value="ECO:0007669"/>
    <property type="project" value="TreeGrafter"/>
</dbReference>
<dbReference type="GO" id="GO:0004048">
    <property type="term" value="F:anthranilate phosphoribosyltransferase activity"/>
    <property type="evidence" value="ECO:0007669"/>
    <property type="project" value="UniProtKB-UniRule"/>
</dbReference>
<dbReference type="GO" id="GO:0000287">
    <property type="term" value="F:magnesium ion binding"/>
    <property type="evidence" value="ECO:0007669"/>
    <property type="project" value="UniProtKB-UniRule"/>
</dbReference>
<dbReference type="GO" id="GO:0000162">
    <property type="term" value="P:L-tryptophan biosynthetic process"/>
    <property type="evidence" value="ECO:0007669"/>
    <property type="project" value="UniProtKB-UniRule"/>
</dbReference>
<dbReference type="FunFam" id="3.40.1030.10:FF:000002">
    <property type="entry name" value="Anthranilate phosphoribosyltransferase"/>
    <property type="match status" value="1"/>
</dbReference>
<dbReference type="Gene3D" id="3.40.1030.10">
    <property type="entry name" value="Nucleoside phosphorylase/phosphoribosyltransferase catalytic domain"/>
    <property type="match status" value="1"/>
</dbReference>
<dbReference type="Gene3D" id="1.20.970.10">
    <property type="entry name" value="Transferase, Pyrimidine Nucleoside Phosphorylase, Chain C"/>
    <property type="match status" value="1"/>
</dbReference>
<dbReference type="HAMAP" id="MF_00211">
    <property type="entry name" value="TrpD"/>
    <property type="match status" value="1"/>
</dbReference>
<dbReference type="InterPro" id="IPR005940">
    <property type="entry name" value="Anthranilate_Pribosyl_Tfrase"/>
</dbReference>
<dbReference type="InterPro" id="IPR000312">
    <property type="entry name" value="Glycosyl_Trfase_fam3"/>
</dbReference>
<dbReference type="InterPro" id="IPR017459">
    <property type="entry name" value="Glycosyl_Trfase_fam3_N_dom"/>
</dbReference>
<dbReference type="InterPro" id="IPR036320">
    <property type="entry name" value="Glycosyl_Trfase_fam3_N_dom_sf"/>
</dbReference>
<dbReference type="InterPro" id="IPR035902">
    <property type="entry name" value="Nuc_phospho_transferase"/>
</dbReference>
<dbReference type="NCBIfam" id="TIGR01245">
    <property type="entry name" value="trpD"/>
    <property type="match status" value="1"/>
</dbReference>
<dbReference type="PANTHER" id="PTHR43285">
    <property type="entry name" value="ANTHRANILATE PHOSPHORIBOSYLTRANSFERASE"/>
    <property type="match status" value="1"/>
</dbReference>
<dbReference type="PANTHER" id="PTHR43285:SF2">
    <property type="entry name" value="ANTHRANILATE PHOSPHORIBOSYLTRANSFERASE"/>
    <property type="match status" value="1"/>
</dbReference>
<dbReference type="Pfam" id="PF02885">
    <property type="entry name" value="Glycos_trans_3N"/>
    <property type="match status" value="1"/>
</dbReference>
<dbReference type="Pfam" id="PF00591">
    <property type="entry name" value="Glycos_transf_3"/>
    <property type="match status" value="1"/>
</dbReference>
<dbReference type="SUPFAM" id="SSF52418">
    <property type="entry name" value="Nucleoside phosphorylase/phosphoribosyltransferase catalytic domain"/>
    <property type="match status" value="1"/>
</dbReference>
<dbReference type="SUPFAM" id="SSF47648">
    <property type="entry name" value="Nucleoside phosphorylase/phosphoribosyltransferase N-terminal domain"/>
    <property type="match status" value="1"/>
</dbReference>
<protein>
    <recommendedName>
        <fullName evidence="1">Anthranilate phosphoribosyltransferase</fullName>
        <ecNumber evidence="1">2.4.2.18</ecNumber>
    </recommendedName>
</protein>
<sequence length="357" mass="37118">MAWEHLRVTDTPTWPSILGRLTTGQNLGTGQAAWAMDQIMTGTATPAQIAGFAVAMKLKRPTSAEVTELADVMLKHARRIPTDIIGNETVDIVGTGGDGANTVNLSTMAAIVVAAAGVPVMKHGNRAASSLSGGADTLEALGVRIDLGPEQVAASVAEVGIGFAFANQFHPSYKHASAVRRELGVPTVFNLLGPLTNPARPRAGLIGCAWAELAEVMAGVFASRNSSVLVVHGDDGLDELTTTTTSTIWRVQAGTVERLTFDPAAFGFQRAHLSELVGGDAEYNAAEVRAVLGGAKGAVRDAVVLNAAGALVAHAGLSSDAKWVPAWEAGLARATETIDSGAAEKLLARWVRFTQKL</sequence>
<evidence type="ECO:0000255" key="1">
    <source>
        <dbReference type="HAMAP-Rule" id="MF_00211"/>
    </source>
</evidence>
<gene>
    <name evidence="1" type="primary">trpD</name>
    <name type="ordered locus">Mkms_3352</name>
</gene>
<comment type="function">
    <text evidence="1">Catalyzes the transfer of the phosphoribosyl group of 5-phosphorylribose-1-pyrophosphate (PRPP) to anthranilate to yield N-(5'-phosphoribosyl)-anthranilate (PRA).</text>
</comment>
<comment type="catalytic activity">
    <reaction evidence="1">
        <text>N-(5-phospho-beta-D-ribosyl)anthranilate + diphosphate = 5-phospho-alpha-D-ribose 1-diphosphate + anthranilate</text>
        <dbReference type="Rhea" id="RHEA:11768"/>
        <dbReference type="ChEBI" id="CHEBI:16567"/>
        <dbReference type="ChEBI" id="CHEBI:18277"/>
        <dbReference type="ChEBI" id="CHEBI:33019"/>
        <dbReference type="ChEBI" id="CHEBI:58017"/>
        <dbReference type="EC" id="2.4.2.18"/>
    </reaction>
</comment>
<comment type="cofactor">
    <cofactor evidence="1">
        <name>Mg(2+)</name>
        <dbReference type="ChEBI" id="CHEBI:18420"/>
    </cofactor>
    <text evidence="1">Binds 2 magnesium ions per monomer.</text>
</comment>
<comment type="pathway">
    <text evidence="1">Amino-acid biosynthesis; L-tryptophan biosynthesis; L-tryptophan from chorismate: step 2/5.</text>
</comment>
<comment type="subunit">
    <text evidence="1">Homodimer.</text>
</comment>
<comment type="similarity">
    <text evidence="1">Belongs to the anthranilate phosphoribosyltransferase family.</text>
</comment>
<proteinExistence type="inferred from homology"/>
<feature type="chain" id="PRO_0000325439" description="Anthranilate phosphoribosyltransferase">
    <location>
        <begin position="1"/>
        <end position="357"/>
    </location>
</feature>
<feature type="binding site" evidence="1">
    <location>
        <position position="94"/>
    </location>
    <ligand>
        <name>5-phospho-alpha-D-ribose 1-diphosphate</name>
        <dbReference type="ChEBI" id="CHEBI:58017"/>
    </ligand>
</feature>
<feature type="binding site" evidence="1">
    <location>
        <position position="94"/>
    </location>
    <ligand>
        <name>anthranilate</name>
        <dbReference type="ChEBI" id="CHEBI:16567"/>
        <label>1</label>
    </ligand>
</feature>
<feature type="binding site" evidence="1">
    <location>
        <begin position="97"/>
        <end position="98"/>
    </location>
    <ligand>
        <name>5-phospho-alpha-D-ribose 1-diphosphate</name>
        <dbReference type="ChEBI" id="CHEBI:58017"/>
    </ligand>
</feature>
<feature type="binding site" evidence="1">
    <location>
        <position position="102"/>
    </location>
    <ligand>
        <name>5-phospho-alpha-D-ribose 1-diphosphate</name>
        <dbReference type="ChEBI" id="CHEBI:58017"/>
    </ligand>
</feature>
<feature type="binding site" evidence="1">
    <location>
        <begin position="104"/>
        <end position="107"/>
    </location>
    <ligand>
        <name>5-phospho-alpha-D-ribose 1-diphosphate</name>
        <dbReference type="ChEBI" id="CHEBI:58017"/>
    </ligand>
</feature>
<feature type="binding site" evidence="1">
    <location>
        <position position="106"/>
    </location>
    <ligand>
        <name>Mg(2+)</name>
        <dbReference type="ChEBI" id="CHEBI:18420"/>
        <label>1</label>
    </ligand>
</feature>
<feature type="binding site" evidence="1">
    <location>
        <begin position="122"/>
        <end position="130"/>
    </location>
    <ligand>
        <name>5-phospho-alpha-D-ribose 1-diphosphate</name>
        <dbReference type="ChEBI" id="CHEBI:58017"/>
    </ligand>
</feature>
<feature type="binding site" evidence="1">
    <location>
        <position position="125"/>
    </location>
    <ligand>
        <name>anthranilate</name>
        <dbReference type="ChEBI" id="CHEBI:16567"/>
        <label>1</label>
    </ligand>
</feature>
<feature type="binding site" evidence="1">
    <location>
        <position position="134"/>
    </location>
    <ligand>
        <name>5-phospho-alpha-D-ribose 1-diphosphate</name>
        <dbReference type="ChEBI" id="CHEBI:58017"/>
    </ligand>
</feature>
<feature type="binding site" evidence="1">
    <location>
        <position position="180"/>
    </location>
    <ligand>
        <name>anthranilate</name>
        <dbReference type="ChEBI" id="CHEBI:16567"/>
        <label>2</label>
    </ligand>
</feature>
<feature type="binding site" evidence="1">
    <location>
        <position position="238"/>
    </location>
    <ligand>
        <name>Mg(2+)</name>
        <dbReference type="ChEBI" id="CHEBI:18420"/>
        <label>2</label>
    </ligand>
</feature>
<feature type="binding site" evidence="1">
    <location>
        <position position="239"/>
    </location>
    <ligand>
        <name>Mg(2+)</name>
        <dbReference type="ChEBI" id="CHEBI:18420"/>
        <label>1</label>
    </ligand>
</feature>
<feature type="binding site" evidence="1">
    <location>
        <position position="239"/>
    </location>
    <ligand>
        <name>Mg(2+)</name>
        <dbReference type="ChEBI" id="CHEBI:18420"/>
        <label>2</label>
    </ligand>
</feature>